<sequence length="237" mass="26837">MTKQKQYVSDVNLTVCGSNKPSSTPGKDIEYFGLIPVDLFISNILSRLPLKSKAKCRCVSKLWSSIIRRPNYNQLFPIKSPAPRILFTIEYAGILFFYSSPQPHNPDENSSLVATLHQNTGNTKFYEICGPVCGRVLCRQYNSVGVIYNPITGESSNLPKLSLKGINKSEWLCDKARYSFGYDPIEKQLKVLCITWLRTGSEHLSNEYQVLTLGTENKKTLLEKDSRLCNSFFLGQY</sequence>
<accession>Q3ECQ9</accession>
<feature type="chain" id="PRO_0000396065" description="Probable F-box protein At1g53815">
    <location>
        <begin position="1"/>
        <end position="237"/>
    </location>
</feature>
<feature type="domain" description="F-box">
    <location>
        <begin position="41"/>
        <end position="72"/>
    </location>
</feature>
<proteinExistence type="predicted"/>
<organism>
    <name type="scientific">Arabidopsis thaliana</name>
    <name type="common">Mouse-ear cress</name>
    <dbReference type="NCBI Taxonomy" id="3702"/>
    <lineage>
        <taxon>Eukaryota</taxon>
        <taxon>Viridiplantae</taxon>
        <taxon>Streptophyta</taxon>
        <taxon>Embryophyta</taxon>
        <taxon>Tracheophyta</taxon>
        <taxon>Spermatophyta</taxon>
        <taxon>Magnoliopsida</taxon>
        <taxon>eudicotyledons</taxon>
        <taxon>Gunneridae</taxon>
        <taxon>Pentapetalae</taxon>
        <taxon>rosids</taxon>
        <taxon>malvids</taxon>
        <taxon>Brassicales</taxon>
        <taxon>Brassicaceae</taxon>
        <taxon>Camelineae</taxon>
        <taxon>Arabidopsis</taxon>
    </lineage>
</organism>
<protein>
    <recommendedName>
        <fullName>Probable F-box protein At1g53815</fullName>
    </recommendedName>
</protein>
<name>FB349_ARATH</name>
<dbReference type="EMBL" id="AC009324">
    <property type="status" value="NOT_ANNOTATED_CDS"/>
    <property type="molecule type" value="Genomic_DNA"/>
</dbReference>
<dbReference type="EMBL" id="CP002684">
    <property type="protein sequence ID" value="AEE33005.1"/>
    <property type="molecule type" value="Genomic_DNA"/>
</dbReference>
<dbReference type="RefSeq" id="NP_974020.1">
    <property type="nucleotide sequence ID" value="NM_202291.1"/>
</dbReference>
<dbReference type="FunCoup" id="Q3ECQ9">
    <property type="interactions" value="11"/>
</dbReference>
<dbReference type="GlyGen" id="Q3ECQ9">
    <property type="glycosylation" value="1 site"/>
</dbReference>
<dbReference type="PaxDb" id="3702-AT1G53815.1"/>
<dbReference type="EnsemblPlants" id="AT1G53815.1">
    <property type="protein sequence ID" value="AT1G53815.1"/>
    <property type="gene ID" value="AT1G53815"/>
</dbReference>
<dbReference type="GeneID" id="2745828"/>
<dbReference type="Gramene" id="AT1G53815.1">
    <property type="protein sequence ID" value="AT1G53815.1"/>
    <property type="gene ID" value="AT1G53815"/>
</dbReference>
<dbReference type="KEGG" id="ath:AT1G53815"/>
<dbReference type="Araport" id="AT1G53815"/>
<dbReference type="TAIR" id="AT1G53815"/>
<dbReference type="HOGENOM" id="CLU_027176_8_3_1"/>
<dbReference type="InParanoid" id="Q3ECQ9"/>
<dbReference type="OMA" id="SSANFFK"/>
<dbReference type="PhylomeDB" id="Q3ECQ9"/>
<dbReference type="PRO" id="PR:Q3ECQ9"/>
<dbReference type="Proteomes" id="UP000006548">
    <property type="component" value="Chromosome 1"/>
</dbReference>
<dbReference type="ExpressionAtlas" id="Q3ECQ9">
    <property type="expression patterns" value="baseline"/>
</dbReference>
<dbReference type="InterPro" id="IPR017451">
    <property type="entry name" value="F-box-assoc_interact_dom"/>
</dbReference>
<dbReference type="InterPro" id="IPR036047">
    <property type="entry name" value="F-box-like_dom_sf"/>
</dbReference>
<dbReference type="InterPro" id="IPR001810">
    <property type="entry name" value="F-box_dom"/>
</dbReference>
<dbReference type="NCBIfam" id="TIGR01640">
    <property type="entry name" value="F_box_assoc_1"/>
    <property type="match status" value="1"/>
</dbReference>
<dbReference type="PANTHER" id="PTHR31111">
    <property type="entry name" value="BNAA05G37150D PROTEIN-RELATED"/>
    <property type="match status" value="1"/>
</dbReference>
<dbReference type="PANTHER" id="PTHR31111:SF125">
    <property type="entry name" value="F-BOX PROTEIN CPR30-LIKE"/>
    <property type="match status" value="1"/>
</dbReference>
<dbReference type="Pfam" id="PF00646">
    <property type="entry name" value="F-box"/>
    <property type="match status" value="1"/>
</dbReference>
<dbReference type="SMART" id="SM00256">
    <property type="entry name" value="FBOX"/>
    <property type="match status" value="1"/>
</dbReference>
<dbReference type="SUPFAM" id="SSF81383">
    <property type="entry name" value="F-box domain"/>
    <property type="match status" value="1"/>
</dbReference>
<reference key="1">
    <citation type="journal article" date="2000" name="Nature">
        <title>Sequence and analysis of chromosome 1 of the plant Arabidopsis thaliana.</title>
        <authorList>
            <person name="Theologis A."/>
            <person name="Ecker J.R."/>
            <person name="Palm C.J."/>
            <person name="Federspiel N.A."/>
            <person name="Kaul S."/>
            <person name="White O."/>
            <person name="Alonso J."/>
            <person name="Altafi H."/>
            <person name="Araujo R."/>
            <person name="Bowman C.L."/>
            <person name="Brooks S.Y."/>
            <person name="Buehler E."/>
            <person name="Chan A."/>
            <person name="Chao Q."/>
            <person name="Chen H."/>
            <person name="Cheuk R.F."/>
            <person name="Chin C.W."/>
            <person name="Chung M.K."/>
            <person name="Conn L."/>
            <person name="Conway A.B."/>
            <person name="Conway A.R."/>
            <person name="Creasy T.H."/>
            <person name="Dewar K."/>
            <person name="Dunn P."/>
            <person name="Etgu P."/>
            <person name="Feldblyum T.V."/>
            <person name="Feng J.-D."/>
            <person name="Fong B."/>
            <person name="Fujii C.Y."/>
            <person name="Gill J.E."/>
            <person name="Goldsmith A.D."/>
            <person name="Haas B."/>
            <person name="Hansen N.F."/>
            <person name="Hughes B."/>
            <person name="Huizar L."/>
            <person name="Hunter J.L."/>
            <person name="Jenkins J."/>
            <person name="Johnson-Hopson C."/>
            <person name="Khan S."/>
            <person name="Khaykin E."/>
            <person name="Kim C.J."/>
            <person name="Koo H.L."/>
            <person name="Kremenetskaia I."/>
            <person name="Kurtz D.B."/>
            <person name="Kwan A."/>
            <person name="Lam B."/>
            <person name="Langin-Hooper S."/>
            <person name="Lee A."/>
            <person name="Lee J.M."/>
            <person name="Lenz C.A."/>
            <person name="Li J.H."/>
            <person name="Li Y.-P."/>
            <person name="Lin X."/>
            <person name="Liu S.X."/>
            <person name="Liu Z.A."/>
            <person name="Luros J.S."/>
            <person name="Maiti R."/>
            <person name="Marziali A."/>
            <person name="Militscher J."/>
            <person name="Miranda M."/>
            <person name="Nguyen M."/>
            <person name="Nierman W.C."/>
            <person name="Osborne B.I."/>
            <person name="Pai G."/>
            <person name="Peterson J."/>
            <person name="Pham P.K."/>
            <person name="Rizzo M."/>
            <person name="Rooney T."/>
            <person name="Rowley D."/>
            <person name="Sakano H."/>
            <person name="Salzberg S.L."/>
            <person name="Schwartz J.R."/>
            <person name="Shinn P."/>
            <person name="Southwick A.M."/>
            <person name="Sun H."/>
            <person name="Tallon L.J."/>
            <person name="Tambunga G."/>
            <person name="Toriumi M.J."/>
            <person name="Town C.D."/>
            <person name="Utterback T."/>
            <person name="Van Aken S."/>
            <person name="Vaysberg M."/>
            <person name="Vysotskaia V.S."/>
            <person name="Walker M."/>
            <person name="Wu D."/>
            <person name="Yu G."/>
            <person name="Fraser C.M."/>
            <person name="Venter J.C."/>
            <person name="Davis R.W."/>
        </authorList>
    </citation>
    <scope>NUCLEOTIDE SEQUENCE [LARGE SCALE GENOMIC DNA]</scope>
    <source>
        <strain>cv. Columbia</strain>
    </source>
</reference>
<reference key="2">
    <citation type="journal article" date="2017" name="Plant J.">
        <title>Araport11: a complete reannotation of the Arabidopsis thaliana reference genome.</title>
        <authorList>
            <person name="Cheng C.Y."/>
            <person name="Krishnakumar V."/>
            <person name="Chan A.P."/>
            <person name="Thibaud-Nissen F."/>
            <person name="Schobel S."/>
            <person name="Town C.D."/>
        </authorList>
    </citation>
    <scope>GENOME REANNOTATION</scope>
    <source>
        <strain>cv. Columbia</strain>
    </source>
</reference>
<gene>
    <name type="ordered locus">At1g53815</name>
    <name type="ORF">T18A20</name>
</gene>
<keyword id="KW-1185">Reference proteome</keyword>